<reference key="1">
    <citation type="journal article" date="2001" name="Nature">
        <title>Genome sequence of enterohaemorrhagic Escherichia coli O157:H7.</title>
        <authorList>
            <person name="Perna N.T."/>
            <person name="Plunkett G. III"/>
            <person name="Burland V."/>
            <person name="Mau B."/>
            <person name="Glasner J.D."/>
            <person name="Rose D.J."/>
            <person name="Mayhew G.F."/>
            <person name="Evans P.S."/>
            <person name="Gregor J."/>
            <person name="Kirkpatrick H.A."/>
            <person name="Posfai G."/>
            <person name="Hackett J."/>
            <person name="Klink S."/>
            <person name="Boutin A."/>
            <person name="Shao Y."/>
            <person name="Miller L."/>
            <person name="Grotbeck E.J."/>
            <person name="Davis N.W."/>
            <person name="Lim A."/>
            <person name="Dimalanta E.T."/>
            <person name="Potamousis K."/>
            <person name="Apodaca J."/>
            <person name="Anantharaman T.S."/>
            <person name="Lin J."/>
            <person name="Yen G."/>
            <person name="Schwartz D.C."/>
            <person name="Welch R.A."/>
            <person name="Blattner F.R."/>
        </authorList>
    </citation>
    <scope>NUCLEOTIDE SEQUENCE [LARGE SCALE GENOMIC DNA]</scope>
    <source>
        <strain>O157:H7 / EDL933 / ATCC 700927 / EHEC</strain>
    </source>
</reference>
<reference key="2">
    <citation type="journal article" date="2001" name="DNA Res.">
        <title>Complete genome sequence of enterohemorrhagic Escherichia coli O157:H7 and genomic comparison with a laboratory strain K-12.</title>
        <authorList>
            <person name="Hayashi T."/>
            <person name="Makino K."/>
            <person name="Ohnishi M."/>
            <person name="Kurokawa K."/>
            <person name="Ishii K."/>
            <person name="Yokoyama K."/>
            <person name="Han C.-G."/>
            <person name="Ohtsubo E."/>
            <person name="Nakayama K."/>
            <person name="Murata T."/>
            <person name="Tanaka M."/>
            <person name="Tobe T."/>
            <person name="Iida T."/>
            <person name="Takami H."/>
            <person name="Honda T."/>
            <person name="Sasakawa C."/>
            <person name="Ogasawara N."/>
            <person name="Yasunaga T."/>
            <person name="Kuhara S."/>
            <person name="Shiba T."/>
            <person name="Hattori M."/>
            <person name="Shinagawa H."/>
        </authorList>
    </citation>
    <scope>NUCLEOTIDE SEQUENCE [LARGE SCALE GENOMIC DNA]</scope>
    <source>
        <strain>O157:H7 / Sakai / RIMD 0509952 / EHEC</strain>
    </source>
</reference>
<organism>
    <name type="scientific">Escherichia coli O157:H7</name>
    <dbReference type="NCBI Taxonomy" id="83334"/>
    <lineage>
        <taxon>Bacteria</taxon>
        <taxon>Pseudomonadati</taxon>
        <taxon>Pseudomonadota</taxon>
        <taxon>Gammaproteobacteria</taxon>
        <taxon>Enterobacterales</taxon>
        <taxon>Enterobacteriaceae</taxon>
        <taxon>Escherichia</taxon>
    </lineage>
</organism>
<accession>P0A6U7</accession>
<accession>P17113</accession>
<evidence type="ECO:0000255" key="1">
    <source>
        <dbReference type="HAMAP-Rule" id="MF_00074"/>
    </source>
</evidence>
<keyword id="KW-0963">Cytoplasm</keyword>
<keyword id="KW-0489">Methyltransferase</keyword>
<keyword id="KW-1185">Reference proteome</keyword>
<keyword id="KW-0698">rRNA processing</keyword>
<keyword id="KW-0949">S-adenosyl-L-methionine</keyword>
<keyword id="KW-0808">Transferase</keyword>
<dbReference type="EC" id="2.1.1.170" evidence="1"/>
<dbReference type="EMBL" id="AE005174">
    <property type="protein sequence ID" value="AAG58943.1"/>
    <property type="molecule type" value="Genomic_DNA"/>
</dbReference>
<dbReference type="EMBL" id="BA000007">
    <property type="protein sequence ID" value="BAB38105.1"/>
    <property type="molecule type" value="Genomic_DNA"/>
</dbReference>
<dbReference type="PIR" id="B91214">
    <property type="entry name" value="B91214"/>
</dbReference>
<dbReference type="PIR" id="C86060">
    <property type="entry name" value="C86060"/>
</dbReference>
<dbReference type="RefSeq" id="NP_312709.1">
    <property type="nucleotide sequence ID" value="NC_002695.1"/>
</dbReference>
<dbReference type="RefSeq" id="WP_000932839.1">
    <property type="nucleotide sequence ID" value="NZ_VOAI01000011.1"/>
</dbReference>
<dbReference type="SMR" id="P0A6U7"/>
<dbReference type="STRING" id="155864.Z5240"/>
<dbReference type="GeneID" id="915344"/>
<dbReference type="GeneID" id="93778227"/>
<dbReference type="KEGG" id="ece:Z5240"/>
<dbReference type="KEGG" id="ecs:ECs_4682"/>
<dbReference type="PATRIC" id="fig|386585.9.peg.4888"/>
<dbReference type="eggNOG" id="COG0357">
    <property type="taxonomic scope" value="Bacteria"/>
</dbReference>
<dbReference type="HOGENOM" id="CLU_065341_2_2_6"/>
<dbReference type="OMA" id="AGMPNKK"/>
<dbReference type="Proteomes" id="UP000000558">
    <property type="component" value="Chromosome"/>
</dbReference>
<dbReference type="Proteomes" id="UP000002519">
    <property type="component" value="Chromosome"/>
</dbReference>
<dbReference type="GO" id="GO:0005829">
    <property type="term" value="C:cytosol"/>
    <property type="evidence" value="ECO:0007669"/>
    <property type="project" value="TreeGrafter"/>
</dbReference>
<dbReference type="GO" id="GO:0070043">
    <property type="term" value="F:rRNA (guanine-N7-)-methyltransferase activity"/>
    <property type="evidence" value="ECO:0007669"/>
    <property type="project" value="UniProtKB-UniRule"/>
</dbReference>
<dbReference type="CDD" id="cd02440">
    <property type="entry name" value="AdoMet_MTases"/>
    <property type="match status" value="1"/>
</dbReference>
<dbReference type="FunFam" id="3.40.50.150:FF:000032">
    <property type="entry name" value="Ribosomal RNA small subunit methyltransferase G"/>
    <property type="match status" value="1"/>
</dbReference>
<dbReference type="Gene3D" id="3.40.50.150">
    <property type="entry name" value="Vaccinia Virus protein VP39"/>
    <property type="match status" value="1"/>
</dbReference>
<dbReference type="HAMAP" id="MF_00074">
    <property type="entry name" value="16SrRNA_methyltr_G"/>
    <property type="match status" value="1"/>
</dbReference>
<dbReference type="InterPro" id="IPR003682">
    <property type="entry name" value="rRNA_ssu_MeTfrase_G"/>
</dbReference>
<dbReference type="InterPro" id="IPR029063">
    <property type="entry name" value="SAM-dependent_MTases_sf"/>
</dbReference>
<dbReference type="NCBIfam" id="TIGR00138">
    <property type="entry name" value="rsmG_gidB"/>
    <property type="match status" value="1"/>
</dbReference>
<dbReference type="PANTHER" id="PTHR31760">
    <property type="entry name" value="S-ADENOSYL-L-METHIONINE-DEPENDENT METHYLTRANSFERASES SUPERFAMILY PROTEIN"/>
    <property type="match status" value="1"/>
</dbReference>
<dbReference type="PANTHER" id="PTHR31760:SF0">
    <property type="entry name" value="S-ADENOSYL-L-METHIONINE-DEPENDENT METHYLTRANSFERASES SUPERFAMILY PROTEIN"/>
    <property type="match status" value="1"/>
</dbReference>
<dbReference type="Pfam" id="PF02527">
    <property type="entry name" value="GidB"/>
    <property type="match status" value="1"/>
</dbReference>
<dbReference type="PIRSF" id="PIRSF003078">
    <property type="entry name" value="GidB"/>
    <property type="match status" value="1"/>
</dbReference>
<dbReference type="SUPFAM" id="SSF53335">
    <property type="entry name" value="S-adenosyl-L-methionine-dependent methyltransferases"/>
    <property type="match status" value="1"/>
</dbReference>
<comment type="function">
    <text evidence="1">Specifically methylates the N7 position of guanine in position 527 of 16S rRNA.</text>
</comment>
<comment type="catalytic activity">
    <reaction evidence="1">
        <text>guanosine(527) in 16S rRNA + S-adenosyl-L-methionine = N(7)-methylguanosine(527) in 16S rRNA + S-adenosyl-L-homocysteine</text>
        <dbReference type="Rhea" id="RHEA:42732"/>
        <dbReference type="Rhea" id="RHEA-COMP:10209"/>
        <dbReference type="Rhea" id="RHEA-COMP:10210"/>
        <dbReference type="ChEBI" id="CHEBI:57856"/>
        <dbReference type="ChEBI" id="CHEBI:59789"/>
        <dbReference type="ChEBI" id="CHEBI:74269"/>
        <dbReference type="ChEBI" id="CHEBI:74480"/>
        <dbReference type="EC" id="2.1.1.170"/>
    </reaction>
</comment>
<comment type="subcellular location">
    <subcellularLocation>
        <location evidence="1">Cytoplasm</location>
    </subcellularLocation>
</comment>
<comment type="similarity">
    <text evidence="1">Belongs to the methyltransferase superfamily. RNA methyltransferase RsmG family.</text>
</comment>
<proteinExistence type="inferred from homology"/>
<sequence>MLNKLSLLLKDAGISLTDHQKNQLIAYVNMLHKWNKAYNLTSVRDPNEMLVRHILDSIVVAPYLQGERFIDVGTGPGLPGIPLSIVRPEAHFTLLDSLGKRVRFLRQVQHELKLENIEPVQSRVEEFPSEPPFDGVISRAFASLNDMVSWCHHLPGEQGRFYALKGQMPEDEIALLPEEYQVESVVKLQVPALDGERHLVVIKANKI</sequence>
<name>RSMG_ECO57</name>
<protein>
    <recommendedName>
        <fullName evidence="1">Ribosomal RNA small subunit methyltransferase G</fullName>
        <ecNumber evidence="1">2.1.1.170</ecNumber>
    </recommendedName>
    <alternativeName>
        <fullName evidence="1">16S rRNA 7-methylguanosine methyltransferase</fullName>
        <shortName evidence="1">16S rRNA m7G methyltransferase</shortName>
    </alternativeName>
</protein>
<gene>
    <name evidence="1" type="primary">rsmG</name>
    <name type="ordered locus">Z5240</name>
    <name type="ordered locus">ECs4682</name>
</gene>
<feature type="chain" id="PRO_0000184250" description="Ribosomal RNA small subunit methyltransferase G">
    <location>
        <begin position="1"/>
        <end position="207"/>
    </location>
</feature>
<feature type="binding site" evidence="1">
    <location>
        <position position="73"/>
    </location>
    <ligand>
        <name>S-adenosyl-L-methionine</name>
        <dbReference type="ChEBI" id="CHEBI:59789"/>
    </ligand>
</feature>
<feature type="binding site" evidence="1">
    <location>
        <position position="78"/>
    </location>
    <ligand>
        <name>S-adenosyl-L-methionine</name>
        <dbReference type="ChEBI" id="CHEBI:59789"/>
    </ligand>
</feature>
<feature type="binding site" evidence="1">
    <location>
        <begin position="124"/>
        <end position="125"/>
    </location>
    <ligand>
        <name>S-adenosyl-L-methionine</name>
        <dbReference type="ChEBI" id="CHEBI:59789"/>
    </ligand>
</feature>
<feature type="binding site" evidence="1">
    <location>
        <position position="139"/>
    </location>
    <ligand>
        <name>S-adenosyl-L-methionine</name>
        <dbReference type="ChEBI" id="CHEBI:59789"/>
    </ligand>
</feature>